<dbReference type="EMBL" id="AF155099">
    <property type="protein sequence ID" value="AAD42865.1"/>
    <property type="status" value="ALT_FRAME"/>
    <property type="molecule type" value="mRNA"/>
</dbReference>
<dbReference type="EMBL" id="AF300717">
    <property type="protein sequence ID" value="AAK21001.1"/>
    <property type="molecule type" value="mRNA"/>
</dbReference>
<dbReference type="EMBL" id="AF459743">
    <property type="protein sequence ID" value="AAO14547.1"/>
    <property type="molecule type" value="mRNA"/>
</dbReference>
<dbReference type="EMBL" id="AY129295">
    <property type="protein sequence ID" value="AAN01355.1"/>
    <property type="molecule type" value="mRNA"/>
</dbReference>
<dbReference type="EMBL" id="AC005486">
    <property type="protein sequence ID" value="AAS02030.1"/>
    <property type="molecule type" value="Genomic_DNA"/>
</dbReference>
<dbReference type="EMBL" id="BC046354">
    <property type="protein sequence ID" value="AAH46354.1"/>
    <property type="molecule type" value="mRNA"/>
</dbReference>
<dbReference type="EMBL" id="AF108083">
    <property type="protein sequence ID" value="AAC82474.2"/>
    <property type="molecule type" value="Genomic_DNA"/>
</dbReference>
<dbReference type="CCDS" id="CCDS47751.3">
    <molecule id="Q9Y5A7-2"/>
</dbReference>
<dbReference type="CCDS" id="CCDS87565.1">
    <molecule id="Q9Y5A7-1"/>
</dbReference>
<dbReference type="RefSeq" id="NP_001230280.2">
    <molecule id="Q9Y5A7-1"/>
    <property type="nucleotide sequence ID" value="NM_001243351.2"/>
</dbReference>
<dbReference type="RefSeq" id="NP_001350458.1">
    <molecule id="Q9Y5A7-1"/>
    <property type="nucleotide sequence ID" value="NM_001363529.2"/>
</dbReference>
<dbReference type="RefSeq" id="NP_001372282.1">
    <molecule id="Q9Y5A7-2"/>
    <property type="nucleotide sequence ID" value="NM_001385353.1"/>
</dbReference>
<dbReference type="RefSeq" id="NP_057202.3">
    <molecule id="Q9Y5A7-2"/>
    <property type="nucleotide sequence ID" value="NM_016118.4"/>
</dbReference>
<dbReference type="RefSeq" id="XP_005250068.1">
    <property type="nucleotide sequence ID" value="XM_005250011.2"/>
</dbReference>
<dbReference type="RefSeq" id="XP_016867795.1">
    <property type="nucleotide sequence ID" value="XM_017012306.1"/>
</dbReference>
<dbReference type="PDB" id="1WJU">
    <property type="method" value="NMR"/>
    <property type="chains" value="A=75-161"/>
</dbReference>
<dbReference type="PDB" id="8USC">
    <property type="method" value="EM"/>
    <property type="resolution" value="3.10 A"/>
    <property type="chains" value="g=1-615"/>
</dbReference>
<dbReference type="PDB" id="8USD">
    <property type="method" value="EM"/>
    <property type="resolution" value="2.70 A"/>
    <property type="chains" value="g=1-254"/>
</dbReference>
<dbReference type="PDB" id="9E8G">
    <property type="method" value="EM"/>
    <property type="resolution" value="3.01 A"/>
    <property type="chains" value="g=1-615"/>
</dbReference>
<dbReference type="PDB" id="9E8H">
    <property type="method" value="EM"/>
    <property type="resolution" value="2.90 A"/>
    <property type="chains" value="g=1-615"/>
</dbReference>
<dbReference type="PDB" id="9E8I">
    <property type="method" value="EM"/>
    <property type="resolution" value="2.87 A"/>
    <property type="chains" value="g=1-615"/>
</dbReference>
<dbReference type="PDB" id="9E8J">
    <property type="method" value="EM"/>
    <property type="resolution" value="3.47 A"/>
    <property type="chains" value="g=1-615"/>
</dbReference>
<dbReference type="PDB" id="9E8L">
    <property type="method" value="EM"/>
    <property type="resolution" value="3.59 A"/>
    <property type="chains" value="g=1-615"/>
</dbReference>
<dbReference type="PDB" id="9E8N">
    <property type="method" value="EM"/>
    <property type="resolution" value="3.62 A"/>
    <property type="chains" value="g=1-615"/>
</dbReference>
<dbReference type="PDBsum" id="1WJU"/>
<dbReference type="PDBsum" id="8USC"/>
<dbReference type="PDBsum" id="8USD"/>
<dbReference type="PDBsum" id="9E8G"/>
<dbReference type="PDBsum" id="9E8H"/>
<dbReference type="PDBsum" id="9E8I"/>
<dbReference type="PDBsum" id="9E8J"/>
<dbReference type="PDBsum" id="9E8L"/>
<dbReference type="PDBsum" id="9E8N"/>
<dbReference type="EMDB" id="EMD-42506"/>
<dbReference type="EMDB" id="EMD-42507"/>
<dbReference type="EMDB" id="EMD-42508"/>
<dbReference type="EMDB" id="EMD-47719"/>
<dbReference type="EMDB" id="EMD-47720"/>
<dbReference type="EMDB" id="EMD-47721"/>
<dbReference type="EMDB" id="EMD-47722"/>
<dbReference type="EMDB" id="EMD-47724"/>
<dbReference type="EMDB" id="EMD-47725"/>
<dbReference type="SMR" id="Q9Y5A7"/>
<dbReference type="BioGRID" id="119670">
    <property type="interactions" value="55"/>
</dbReference>
<dbReference type="CORUM" id="Q9Y5A7"/>
<dbReference type="FunCoup" id="Q9Y5A7">
    <property type="interactions" value="3113"/>
</dbReference>
<dbReference type="IntAct" id="Q9Y5A7">
    <property type="interactions" value="25"/>
</dbReference>
<dbReference type="MINT" id="Q9Y5A7"/>
<dbReference type="STRING" id="9606.ENSP00000454264"/>
<dbReference type="iPTMnet" id="Q9Y5A7"/>
<dbReference type="MetOSite" id="Q9Y5A7"/>
<dbReference type="PhosphoSitePlus" id="Q9Y5A7"/>
<dbReference type="BioMuta" id="NUB1"/>
<dbReference type="DMDM" id="37154888"/>
<dbReference type="jPOST" id="Q9Y5A7"/>
<dbReference type="MassIVE" id="Q9Y5A7"/>
<dbReference type="PaxDb" id="9606-ENSP00000454264"/>
<dbReference type="PeptideAtlas" id="Q9Y5A7"/>
<dbReference type="ProteomicsDB" id="86324">
    <molecule id="Q9Y5A7-1"/>
</dbReference>
<dbReference type="ProteomicsDB" id="86325">
    <molecule id="Q9Y5A7-2"/>
</dbReference>
<dbReference type="Pumba" id="Q9Y5A7"/>
<dbReference type="Antibodypedia" id="33007">
    <property type="antibodies" value="379 antibodies from 31 providers"/>
</dbReference>
<dbReference type="DNASU" id="51667"/>
<dbReference type="Ensembl" id="ENST00000413040.7">
    <molecule id="Q9Y5A7-2"/>
    <property type="protein sequence ID" value="ENSP00000398644.3"/>
    <property type="gene ID" value="ENSG00000013374.17"/>
</dbReference>
<dbReference type="Ensembl" id="ENST00000470229.6">
    <molecule id="Q9Y5A7-1"/>
    <property type="protein sequence ID" value="ENSP00000418234.2"/>
    <property type="gene ID" value="ENSG00000013374.17"/>
</dbReference>
<dbReference type="Ensembl" id="ENST00000568733.6">
    <molecule id="Q9Y5A7-1"/>
    <property type="protein sequence ID" value="ENSP00000454264.2"/>
    <property type="gene ID" value="ENSG00000013374.17"/>
</dbReference>
<dbReference type="GeneID" id="51667"/>
<dbReference type="KEGG" id="hsa:51667"/>
<dbReference type="MANE-Select" id="ENST00000568733.6">
    <property type="protein sequence ID" value="ENSP00000454264.2"/>
    <property type="RefSeq nucleotide sequence ID" value="NM_001243351.2"/>
    <property type="RefSeq protein sequence ID" value="NP_001230280.2"/>
</dbReference>
<dbReference type="AGR" id="HGNC:17623"/>
<dbReference type="CTD" id="51667"/>
<dbReference type="DisGeNET" id="51667"/>
<dbReference type="GeneCards" id="NUB1"/>
<dbReference type="HGNC" id="HGNC:17623">
    <property type="gene designation" value="NUB1"/>
</dbReference>
<dbReference type="HPA" id="ENSG00000013374">
    <property type="expression patterns" value="Low tissue specificity"/>
</dbReference>
<dbReference type="MIM" id="607981">
    <property type="type" value="gene"/>
</dbReference>
<dbReference type="neXtProt" id="NX_Q9Y5A7"/>
<dbReference type="OpenTargets" id="ENSG00000013374"/>
<dbReference type="PharmGKB" id="PA147357533"/>
<dbReference type="VEuPathDB" id="HostDB:ENSG00000013374"/>
<dbReference type="eggNOG" id="KOG2561">
    <property type="taxonomic scope" value="Eukaryota"/>
</dbReference>
<dbReference type="GeneTree" id="ENSGT00390000010557"/>
<dbReference type="InParanoid" id="Q9Y5A7"/>
<dbReference type="OMA" id="EQKRYGM"/>
<dbReference type="OrthoDB" id="434245at2759"/>
<dbReference type="PAN-GO" id="Q9Y5A7">
    <property type="GO annotations" value="1 GO annotation based on evolutionary models"/>
</dbReference>
<dbReference type="PhylomeDB" id="Q9Y5A7"/>
<dbReference type="TreeFam" id="TF323449"/>
<dbReference type="PathwayCommons" id="Q9Y5A7"/>
<dbReference type="Reactome" id="R-HSA-8951664">
    <property type="pathway name" value="Neddylation"/>
</dbReference>
<dbReference type="SignaLink" id="Q9Y5A7"/>
<dbReference type="BioGRID-ORCS" id="51667">
    <property type="hits" value="10 hits in 1158 CRISPR screens"/>
</dbReference>
<dbReference type="ChiTaRS" id="NUB1">
    <property type="organism name" value="human"/>
</dbReference>
<dbReference type="EvolutionaryTrace" id="Q9Y5A7"/>
<dbReference type="GeneWiki" id="NUB1"/>
<dbReference type="GenomeRNAi" id="51667"/>
<dbReference type="Pharos" id="Q9Y5A7">
    <property type="development level" value="Tbio"/>
</dbReference>
<dbReference type="PRO" id="PR:Q9Y5A7"/>
<dbReference type="Proteomes" id="UP000005640">
    <property type="component" value="Chromosome 7"/>
</dbReference>
<dbReference type="RNAct" id="Q9Y5A7">
    <property type="molecule type" value="protein"/>
</dbReference>
<dbReference type="Bgee" id="ENSG00000013374">
    <property type="expression patterns" value="Expressed in oviduct epithelium and 181 other cell types or tissues"/>
</dbReference>
<dbReference type="ExpressionAtlas" id="Q9Y5A7">
    <property type="expression patterns" value="baseline and differential"/>
</dbReference>
<dbReference type="GO" id="GO:0005829">
    <property type="term" value="C:cytosol"/>
    <property type="evidence" value="ECO:0000314"/>
    <property type="project" value="HPA"/>
</dbReference>
<dbReference type="GO" id="GO:0097413">
    <property type="term" value="C:Lewy body"/>
    <property type="evidence" value="ECO:0007669"/>
    <property type="project" value="Ensembl"/>
</dbReference>
<dbReference type="GO" id="GO:0005730">
    <property type="term" value="C:nucleolus"/>
    <property type="evidence" value="ECO:0000314"/>
    <property type="project" value="HPA"/>
</dbReference>
<dbReference type="GO" id="GO:0005654">
    <property type="term" value="C:nucleoplasm"/>
    <property type="evidence" value="ECO:0000314"/>
    <property type="project" value="HPA"/>
</dbReference>
<dbReference type="GO" id="GO:0032436">
    <property type="term" value="P:positive regulation of proteasomal ubiquitin-dependent protein catabolic process"/>
    <property type="evidence" value="ECO:0000315"/>
    <property type="project" value="UniProtKB"/>
</dbReference>
<dbReference type="GO" id="GO:0010498">
    <property type="term" value="P:proteasomal protein catabolic process"/>
    <property type="evidence" value="ECO:0007669"/>
    <property type="project" value="Ensembl"/>
</dbReference>
<dbReference type="GO" id="GO:0016567">
    <property type="term" value="P:protein ubiquitination"/>
    <property type="evidence" value="ECO:0000315"/>
    <property type="project" value="UniProtKB"/>
</dbReference>
<dbReference type="GO" id="GO:2000058">
    <property type="term" value="P:regulation of ubiquitin-dependent protein catabolic process"/>
    <property type="evidence" value="ECO:0000318"/>
    <property type="project" value="GO_Central"/>
</dbReference>
<dbReference type="GO" id="GO:0034612">
    <property type="term" value="P:response to tumor necrosis factor"/>
    <property type="evidence" value="ECO:0000270"/>
    <property type="project" value="UniProtKB"/>
</dbReference>
<dbReference type="GO" id="GO:0034341">
    <property type="term" value="P:response to type II interferon"/>
    <property type="evidence" value="ECO:0000270"/>
    <property type="project" value="UniProtKB"/>
</dbReference>
<dbReference type="GO" id="GO:0006511">
    <property type="term" value="P:ubiquitin-dependent protein catabolic process"/>
    <property type="evidence" value="ECO:0000315"/>
    <property type="project" value="UniProtKB"/>
</dbReference>
<dbReference type="CDD" id="cd14291">
    <property type="entry name" value="UBA1_NUB1_like"/>
    <property type="match status" value="1"/>
</dbReference>
<dbReference type="CDD" id="cd14292">
    <property type="entry name" value="UBA2_NUB1"/>
    <property type="match status" value="1"/>
</dbReference>
<dbReference type="CDD" id="cd17062">
    <property type="entry name" value="Ubl_NUB1"/>
    <property type="match status" value="1"/>
</dbReference>
<dbReference type="FunFam" id="1.10.8.10:FF:000073">
    <property type="entry name" value="NEDD8 ultimate buster 1 isoform X1"/>
    <property type="match status" value="1"/>
</dbReference>
<dbReference type="FunFam" id="3.10.20.90:FF:000151">
    <property type="entry name" value="NEDD8 ultimate buster 1 isoform X1"/>
    <property type="match status" value="1"/>
</dbReference>
<dbReference type="FunFam" id="1.10.8.10:FF:000062">
    <property type="entry name" value="NEDD8 ultimate buster 1 isoform X2"/>
    <property type="match status" value="1"/>
</dbReference>
<dbReference type="Gene3D" id="1.10.8.10">
    <property type="entry name" value="DNA helicase RuvA subunit, C-terminal domain"/>
    <property type="match status" value="3"/>
</dbReference>
<dbReference type="Gene3D" id="3.10.20.90">
    <property type="entry name" value="Phosphatidylinositol 3-kinase Catalytic Subunit, Chain A, domain 1"/>
    <property type="match status" value="1"/>
</dbReference>
<dbReference type="InterPro" id="IPR039749">
    <property type="entry name" value="NUB1"/>
</dbReference>
<dbReference type="InterPro" id="IPR041207">
    <property type="entry name" value="NUB1_ubiquitin-like_dom"/>
</dbReference>
<dbReference type="InterPro" id="IPR011990">
    <property type="entry name" value="TPR-like_helical_dom_sf"/>
</dbReference>
<dbReference type="InterPro" id="IPR015940">
    <property type="entry name" value="UBA"/>
</dbReference>
<dbReference type="InterPro" id="IPR009060">
    <property type="entry name" value="UBA-like_sf"/>
</dbReference>
<dbReference type="InterPro" id="IPR029071">
    <property type="entry name" value="Ubiquitin-like_domsf"/>
</dbReference>
<dbReference type="PANTHER" id="PTHR12948:SF3">
    <property type="entry name" value="NEDD8 ULTIMATE BUSTER 1"/>
    <property type="match status" value="1"/>
</dbReference>
<dbReference type="PANTHER" id="PTHR12948">
    <property type="entry name" value="NEDD8 ULTIMATE BUSTER-1 BS4 PROTEIN"/>
    <property type="match status" value="1"/>
</dbReference>
<dbReference type="Pfam" id="PF00627">
    <property type="entry name" value="UBA"/>
    <property type="match status" value="2"/>
</dbReference>
<dbReference type="Pfam" id="PF18037">
    <property type="entry name" value="Ubiquitin_5"/>
    <property type="match status" value="1"/>
</dbReference>
<dbReference type="SMART" id="SM00165">
    <property type="entry name" value="UBA"/>
    <property type="match status" value="3"/>
</dbReference>
<dbReference type="SUPFAM" id="SSF48452">
    <property type="entry name" value="TPR-like"/>
    <property type="match status" value="1"/>
</dbReference>
<dbReference type="SUPFAM" id="SSF46934">
    <property type="entry name" value="UBA-like"/>
    <property type="match status" value="3"/>
</dbReference>
<dbReference type="SUPFAM" id="SSF54236">
    <property type="entry name" value="Ubiquitin-like"/>
    <property type="match status" value="1"/>
</dbReference>
<dbReference type="PROSITE" id="PS50030">
    <property type="entry name" value="UBA"/>
    <property type="match status" value="3"/>
</dbReference>
<accession>Q9Y5A7</accession>
<accession>O95422</accession>
<accession>Q75MR9</accession>
<accession>Q8IX22</accession>
<accession>Q9BXR2</accession>
<name>NUB1_HUMAN</name>
<keyword id="KW-0002">3D-structure</keyword>
<keyword id="KW-0025">Alternative splicing</keyword>
<keyword id="KW-0175">Coiled coil</keyword>
<keyword id="KW-0539">Nucleus</keyword>
<keyword id="KW-1267">Proteomics identification</keyword>
<keyword id="KW-1185">Reference proteome</keyword>
<keyword id="KW-0677">Repeat</keyword>
<reference key="1">
    <citation type="journal article" date="1999" name="Int. J. Cancer">
        <title>Antigens recognized by autologous antibody in patients with renal-cell carcinoma.</title>
        <authorList>
            <person name="Scanlan M.J."/>
            <person name="Gordan J.D."/>
            <person name="Williamson B."/>
            <person name="Stockert E."/>
            <person name="Bander N.H."/>
            <person name="Jongeneel C.V."/>
            <person name="Gure A.O."/>
            <person name="Jaeger D."/>
            <person name="Jaeger E."/>
            <person name="Knuth A."/>
            <person name="Chen Y.-T."/>
            <person name="Old L.J."/>
        </authorList>
    </citation>
    <scope>NUCLEOTIDE SEQUENCE [MRNA] (ISOFORM 2)</scope>
    <scope>IDENTIFICATION AS A RENAL CANCER ANTIGEN</scope>
    <source>
        <tissue>Renal cell carcinoma</tissue>
    </source>
</reference>
<reference key="2">
    <citation type="journal article" date="2001" name="J. Biol. Chem.">
        <title>NUB1, a NEDD8-interacting protein, is induced by interferon and down-regulates the NEDD8 expression.</title>
        <authorList>
            <person name="Kito K."/>
            <person name="Yeh E.T.H."/>
            <person name="Kamitani T."/>
        </authorList>
    </citation>
    <scope>NUCLEOTIDE SEQUENCE [MRNA] (ISOFORM 2)</scope>
    <scope>INTERACTION WITH NEDD8</scope>
    <scope>SUBCELLULAR LOCATION</scope>
    <scope>INDUCTION BY INTERFERONS</scope>
    <source>
        <tissue>Heart</tissue>
    </source>
</reference>
<reference key="3">
    <citation type="journal article" date="2003" name="J. Biol. Chem.">
        <title>Regulation of the NEDD8 conjugation system by a splicing variant, NUB1L.</title>
        <authorList>
            <person name="Tanaka T."/>
            <person name="Kawashima H."/>
            <person name="Yeh E.T.H."/>
            <person name="Kamitani T."/>
        </authorList>
    </citation>
    <scope>NUCLEOTIDE SEQUENCE [MRNA] (ISOFORMS 1 AND 2)</scope>
    <scope>CHARACTERIZATION</scope>
    <scope>MUTAGENESIS OF ALA-448; LEU-453; LEU-464; LEU-468; LEU-587 AND LEU-591</scope>
    <source>
        <tissue>Testis</tissue>
    </source>
</reference>
<reference key="4">
    <citation type="journal article" date="2003" name="Nature">
        <title>The DNA sequence of human chromosome 7.</title>
        <authorList>
            <person name="Hillier L.W."/>
            <person name="Fulton R.S."/>
            <person name="Fulton L.A."/>
            <person name="Graves T.A."/>
            <person name="Pepin K.H."/>
            <person name="Wagner-McPherson C."/>
            <person name="Layman D."/>
            <person name="Maas J."/>
            <person name="Jaeger S."/>
            <person name="Walker R."/>
            <person name="Wylie K."/>
            <person name="Sekhon M."/>
            <person name="Becker M.C."/>
            <person name="O'Laughlin M.D."/>
            <person name="Schaller M.E."/>
            <person name="Fewell G.A."/>
            <person name="Delehaunty K.D."/>
            <person name="Miner T.L."/>
            <person name="Nash W.E."/>
            <person name="Cordes M."/>
            <person name="Du H."/>
            <person name="Sun H."/>
            <person name="Edwards J."/>
            <person name="Bradshaw-Cordum H."/>
            <person name="Ali J."/>
            <person name="Andrews S."/>
            <person name="Isak A."/>
            <person name="Vanbrunt A."/>
            <person name="Nguyen C."/>
            <person name="Du F."/>
            <person name="Lamar B."/>
            <person name="Courtney L."/>
            <person name="Kalicki J."/>
            <person name="Ozersky P."/>
            <person name="Bielicki L."/>
            <person name="Scott K."/>
            <person name="Holmes A."/>
            <person name="Harkins R."/>
            <person name="Harris A."/>
            <person name="Strong C.M."/>
            <person name="Hou S."/>
            <person name="Tomlinson C."/>
            <person name="Dauphin-Kohlberg S."/>
            <person name="Kozlowicz-Reilly A."/>
            <person name="Leonard S."/>
            <person name="Rohlfing T."/>
            <person name="Rock S.M."/>
            <person name="Tin-Wollam A.-M."/>
            <person name="Abbott A."/>
            <person name="Minx P."/>
            <person name="Maupin R."/>
            <person name="Strowmatt C."/>
            <person name="Latreille P."/>
            <person name="Miller N."/>
            <person name="Johnson D."/>
            <person name="Murray J."/>
            <person name="Woessner J.P."/>
            <person name="Wendl M.C."/>
            <person name="Yang S.-P."/>
            <person name="Schultz B.R."/>
            <person name="Wallis J.W."/>
            <person name="Spieth J."/>
            <person name="Bieri T.A."/>
            <person name="Nelson J.O."/>
            <person name="Berkowicz N."/>
            <person name="Wohldmann P.E."/>
            <person name="Cook L.L."/>
            <person name="Hickenbotham M.T."/>
            <person name="Eldred J."/>
            <person name="Williams D."/>
            <person name="Bedell J.A."/>
            <person name="Mardis E.R."/>
            <person name="Clifton S.W."/>
            <person name="Chissoe S.L."/>
            <person name="Marra M.A."/>
            <person name="Raymond C."/>
            <person name="Haugen E."/>
            <person name="Gillett W."/>
            <person name="Zhou Y."/>
            <person name="James R."/>
            <person name="Phelps K."/>
            <person name="Iadanoto S."/>
            <person name="Bubb K."/>
            <person name="Simms E."/>
            <person name="Levy R."/>
            <person name="Clendenning J."/>
            <person name="Kaul R."/>
            <person name="Kent W.J."/>
            <person name="Furey T.S."/>
            <person name="Baertsch R.A."/>
            <person name="Brent M.R."/>
            <person name="Keibler E."/>
            <person name="Flicek P."/>
            <person name="Bork P."/>
            <person name="Suyama M."/>
            <person name="Bailey J.A."/>
            <person name="Portnoy M.E."/>
            <person name="Torrents D."/>
            <person name="Chinwalla A.T."/>
            <person name="Gish W.R."/>
            <person name="Eddy S.R."/>
            <person name="McPherson J.D."/>
            <person name="Olson M.V."/>
            <person name="Eichler E.E."/>
            <person name="Green E.D."/>
            <person name="Waterston R.H."/>
            <person name="Wilson R.K."/>
        </authorList>
    </citation>
    <scope>NUCLEOTIDE SEQUENCE [LARGE SCALE GENOMIC DNA]</scope>
</reference>
<reference key="5">
    <citation type="journal article" date="2004" name="Genome Res.">
        <title>The status, quality, and expansion of the NIH full-length cDNA project: the Mammalian Gene Collection (MGC).</title>
        <authorList>
            <consortium name="The MGC Project Team"/>
        </authorList>
    </citation>
    <scope>NUCLEOTIDE SEQUENCE [LARGE SCALE MRNA] (ISOFORM 2)</scope>
    <source>
        <tissue>Testis</tissue>
    </source>
</reference>
<reference key="6">
    <citation type="submission" date="2001-09" db="EMBL/GenBank/DDBJ databases">
        <authorList>
            <person name="Rump A."/>
            <person name="Rosenthal A."/>
            <person name="Drescher B."/>
            <person name="Weber J."/>
            <person name="Schattevoy R."/>
            <person name="Korenberg J."/>
        </authorList>
    </citation>
    <scope>NUCLEOTIDE SEQUENCE [GENOMIC DNA] OF 1-365</scope>
</reference>
<reference key="7">
    <citation type="journal article" date="2001" name="J. Biol. Chem.">
        <title>Targeting of NEDD8 and its conjugates for proteasomal degradation by NUB1.</title>
        <authorList>
            <person name="Kamitani T."/>
            <person name="Kito K."/>
            <person name="Fukuda-Kamitani T."/>
            <person name="Yeh E.T.H."/>
        </authorList>
    </citation>
    <scope>INTERACTION WITH PSMD4</scope>
</reference>
<reference key="8">
    <citation type="journal article" date="2002" name="Hum. Mol. Genet.">
        <title>The inherited blindness associated protein AIPL1 interacts with the cell cycle regulator protein NUB1.</title>
        <authorList>
            <person name="Akey D.T."/>
            <person name="Zhu X."/>
            <person name="Dyer M."/>
            <person name="Li A."/>
            <person name="Sorensen A."/>
            <person name="Blackshaw S."/>
            <person name="Fukuda-Kamitani T."/>
            <person name="Daiger S.P."/>
            <person name="Craft C.M."/>
            <person name="Kamitani T."/>
            <person name="Sohocki M.M."/>
        </authorList>
    </citation>
    <scope>INTERACTION WITH AIPL1</scope>
    <source>
        <tissue>Retina</tissue>
    </source>
</reference>
<reference key="9">
    <citation type="journal article" date="2004" name="J. Biol. Chem.">
        <title>NEDD8 ultimate buster-1L interacts with the ubiquitin-like protein FAT10 and accelerates its degradation.</title>
        <authorList>
            <person name="Hipp M.S."/>
            <person name="Raasi S."/>
            <person name="Groettrup M."/>
            <person name="Schmidtke G."/>
        </authorList>
    </citation>
    <scope>INTERACTION WITH UBD</scope>
</reference>
<reference key="10">
    <citation type="journal article" date="2006" name="J. Biol. Chem.">
        <title>The UBA domains of NUB1L are required for binding but not for accelerated degradation of the ubiquitin-like modifier FAT10.</title>
        <authorList>
            <person name="Schmidtke G."/>
            <person name="Kalveram B."/>
            <person name="Weber E."/>
            <person name="Bochtler P."/>
            <person name="Lukasiak S."/>
            <person name="Hipp M.S."/>
            <person name="Groettrup M."/>
        </authorList>
    </citation>
    <scope>FUNCTION</scope>
    <scope>INTERACTION WITH UBD AND PROTEASOME</scope>
    <scope>INDUCTION BY TNF AND IFNG</scope>
</reference>
<reference key="11">
    <citation type="journal article" date="2011" name="BMC Syst. Biol.">
        <title>Initial characterization of the human central proteome.</title>
        <authorList>
            <person name="Burkard T.R."/>
            <person name="Planyavsky M."/>
            <person name="Kaupe I."/>
            <person name="Breitwieser F.P."/>
            <person name="Buerckstuemmer T."/>
            <person name="Bennett K.L."/>
            <person name="Superti-Furga G."/>
            <person name="Colinge J."/>
        </authorList>
    </citation>
    <scope>IDENTIFICATION BY MASS SPECTROMETRY [LARGE SCALE ANALYSIS]</scope>
</reference>
<reference key="12">
    <citation type="journal article" date="2014" name="J. Proteomics">
        <title>An enzyme assisted RP-RPLC approach for in-depth analysis of human liver phosphoproteome.</title>
        <authorList>
            <person name="Bian Y."/>
            <person name="Song C."/>
            <person name="Cheng K."/>
            <person name="Dong M."/>
            <person name="Wang F."/>
            <person name="Huang J."/>
            <person name="Sun D."/>
            <person name="Wang L."/>
            <person name="Ye M."/>
            <person name="Zou H."/>
        </authorList>
    </citation>
    <scope>IDENTIFICATION BY MASS SPECTROMETRY [LARGE SCALE ANALYSIS]</scope>
    <source>
        <tissue>Liver</tissue>
    </source>
</reference>
<reference key="13">
    <citation type="journal article" date="2014" name="Proc. Natl. Acad. Sci. U.S.A.">
        <title>Disruption of FAT10-MAD2 binding inhibits tumor progression.</title>
        <authorList>
            <person name="Theng S.S."/>
            <person name="Wang W."/>
            <person name="Mah W.C."/>
            <person name="Chan C."/>
            <person name="Zhuo J."/>
            <person name="Gao Y."/>
            <person name="Qin H."/>
            <person name="Lim L."/>
            <person name="Chong S.S."/>
            <person name="Song J."/>
            <person name="Lee C.G."/>
        </authorList>
    </citation>
    <scope>INTERACTION WITH UBD</scope>
</reference>
<reference key="14">
    <citation type="submission" date="2006-01" db="PDB data bank">
        <title>Solution structure of N-terminal ubiquitin-like domain of human NEDD8 ultimate buster-1.</title>
        <authorList>
            <consortium name="RIKEN structural genomics initiative (RSGI)"/>
        </authorList>
    </citation>
    <scope>STRUCTURE BY NMR OF 75-161</scope>
</reference>
<sequence>MAQKKYLQAKLTQFLREDRIQLWKPPYTDENKKVGLALKDLAKQYSDRLECCENEVEKVIEEIRCKAIERGTGNDNYRTTGIATIEVFLPPRLKKDRKNLLETRLHITGRELRSKIAETFGLQENYIKIVINKKQLQLGKTLEEQGVAHNVKAMVLELKQSEEDARKNFQLEEEEQNEAKLKEKQIQRTKRGLEILAKRAAETVVDPEMTPYLDIANQTGRSIRIPPSERKALMLAMGYHEKGRAFLKRKEYGIALPCLLDADKYFCECCRELLDTVDNYAVLQLDIVWCYFRLEQLECLDDAEKKLNLAQKCFKNCYGENHQRLVHIKGNCGKEKVLFLRLYLLQGIRNYHSGNDVEAYEYLNKARQLFKELYIDPSKVDNLLQLGFTAQEARLGLRACDGNVDHAATHITNRREELAQIRKEEKEKKRRRLENIRFLKGMGYSTHAAQQVLHAASGNLDEALKILLSNPQMWWLNDSNPETDNRQESPSQENIDRLVYMGFDALVAEAALRVFRGNVQLAAQTLAHNGGSLPPELPLSPEDSLSPPATSPSDSAGTSSASTDEDMETEAVNEILEDIPEHEEDYLDSTLEDEEIIIAEYLSYVENRKSATKKN</sequence>
<proteinExistence type="evidence at protein level"/>
<protein>
    <recommendedName>
        <fullName>NEDD8 ultimate buster 1</fullName>
    </recommendedName>
    <alternativeName>
        <fullName>Negative regulator of ubiquitin-like proteins 1</fullName>
    </alternativeName>
    <alternativeName>
        <fullName>Renal carcinoma antigen NY-REN-18</fullName>
    </alternativeName>
</protein>
<evidence type="ECO:0000255" key="1"/>
<evidence type="ECO:0000255" key="2">
    <source>
        <dbReference type="PROSITE-ProRule" id="PRU00212"/>
    </source>
</evidence>
<evidence type="ECO:0000256" key="3">
    <source>
        <dbReference type="SAM" id="MobiDB-lite"/>
    </source>
</evidence>
<evidence type="ECO:0000269" key="4">
    <source>
    </source>
</evidence>
<evidence type="ECO:0000269" key="5">
    <source>
    </source>
</evidence>
<evidence type="ECO:0000269" key="6">
    <source>
    </source>
</evidence>
<evidence type="ECO:0000269" key="7">
    <source>
    </source>
</evidence>
<evidence type="ECO:0000269" key="8">
    <source>
    </source>
</evidence>
<evidence type="ECO:0000269" key="9">
    <source>
    </source>
</evidence>
<evidence type="ECO:0000269" key="10">
    <source>
    </source>
</evidence>
<evidence type="ECO:0000303" key="11">
    <source>
    </source>
</evidence>
<evidence type="ECO:0000303" key="12">
    <source>
    </source>
</evidence>
<evidence type="ECO:0000303" key="13">
    <source>
    </source>
</evidence>
<evidence type="ECO:0000303" key="14">
    <source>
    </source>
</evidence>
<evidence type="ECO:0000305" key="15"/>
<evidence type="ECO:0007829" key="16">
    <source>
        <dbReference type="PDB" id="1WJU"/>
    </source>
</evidence>
<evidence type="ECO:0007829" key="17">
    <source>
        <dbReference type="PDB" id="9E8J"/>
    </source>
</evidence>
<organism>
    <name type="scientific">Homo sapiens</name>
    <name type="common">Human</name>
    <dbReference type="NCBI Taxonomy" id="9606"/>
    <lineage>
        <taxon>Eukaryota</taxon>
        <taxon>Metazoa</taxon>
        <taxon>Chordata</taxon>
        <taxon>Craniata</taxon>
        <taxon>Vertebrata</taxon>
        <taxon>Euteleostomi</taxon>
        <taxon>Mammalia</taxon>
        <taxon>Eutheria</taxon>
        <taxon>Euarchontoglires</taxon>
        <taxon>Primates</taxon>
        <taxon>Haplorrhini</taxon>
        <taxon>Catarrhini</taxon>
        <taxon>Hominidae</taxon>
        <taxon>Homo</taxon>
    </lineage>
</organism>
<feature type="chain" id="PRO_0000210992" description="NEDD8 ultimate buster 1">
    <location>
        <begin position="1"/>
        <end position="615"/>
    </location>
</feature>
<feature type="domain" description="UBA 1" evidence="2">
    <location>
        <begin position="374"/>
        <end position="413"/>
    </location>
</feature>
<feature type="domain" description="UBA 2" evidence="2">
    <location>
        <begin position="424"/>
        <end position="470"/>
    </location>
</feature>
<feature type="domain" description="UBA 3" evidence="2">
    <location>
        <begin position="489"/>
        <end position="529"/>
    </location>
</feature>
<feature type="region of interest" description="NEDD8-binding 1">
    <location>
        <begin position="427"/>
        <end position="474"/>
    </location>
</feature>
<feature type="region of interest" description="Disordered" evidence="3">
    <location>
        <begin position="532"/>
        <end position="586"/>
    </location>
</feature>
<feature type="region of interest" description="NEDD8-binding 2">
    <location>
        <begin position="550"/>
        <end position="598"/>
    </location>
</feature>
<feature type="coiled-coil region" evidence="1">
    <location>
        <begin position="36"/>
        <end position="70"/>
    </location>
</feature>
<feature type="coiled-coil region" evidence="1">
    <location>
        <begin position="152"/>
        <end position="203"/>
    </location>
</feature>
<feature type="short sequence motif" description="Nuclear localization signal" evidence="15">
    <location>
        <begin position="414"/>
        <end position="431"/>
    </location>
</feature>
<feature type="compositionally biased region" description="Low complexity" evidence="3">
    <location>
        <begin position="539"/>
        <end position="562"/>
    </location>
</feature>
<feature type="compositionally biased region" description="Acidic residues" evidence="3">
    <location>
        <begin position="563"/>
        <end position="586"/>
    </location>
</feature>
<feature type="splice variant" id="VSP_008335" description="In isoform 2." evidence="11 12 13 14">
    <location>
        <begin position="452"/>
        <end position="465"/>
    </location>
</feature>
<feature type="sequence variant" id="VAR_057369" description="In dbSNP:rs2302131.">
    <original>Q</original>
    <variation>R</variation>
    <location>
        <position position="13"/>
    </location>
</feature>
<feature type="mutagenesis site" description="No effect on NEDD8-binding." evidence="7">
    <original>A</original>
    <variation>V</variation>
    <location>
        <position position="448"/>
    </location>
</feature>
<feature type="mutagenesis site" description="Partial inhibition of NEDD8-binding." evidence="7">
    <original>L</original>
    <variation>A</variation>
    <location>
        <position position="453"/>
    </location>
</feature>
<feature type="mutagenesis site" description="Partial inhibition of NEDD8-binding." evidence="7">
    <original>L</original>
    <variation>A</variation>
    <location>
        <position position="464"/>
    </location>
</feature>
<feature type="mutagenesis site" description="Partial inhibition of NEDD8-binding." evidence="7">
    <original>L</original>
    <variation>A</variation>
    <location>
        <position position="468"/>
    </location>
</feature>
<feature type="mutagenesis site" description="Suppression of NEDD8-binding; when associated with A-464; A-468 and A-591. Suppression of NEDD8-buster function; when associated with A-591." evidence="7">
    <original>L</original>
    <variation>A</variation>
    <location>
        <position position="587"/>
    </location>
</feature>
<feature type="mutagenesis site" description="Suppression of NEDD8-binding; when associated with A-464; A-468 and A-587. Suppression of NEDD8-buster function; when associated with A-587." evidence="7">
    <original>L</original>
    <variation>A</variation>
    <location>
        <position position="591"/>
    </location>
</feature>
<feature type="strand" evidence="16">
    <location>
        <begin position="76"/>
        <end position="78"/>
    </location>
</feature>
<feature type="strand" evidence="16">
    <location>
        <begin position="82"/>
        <end position="88"/>
    </location>
</feature>
<feature type="strand" evidence="17">
    <location>
        <begin position="91"/>
        <end position="93"/>
    </location>
</feature>
<feature type="strand" evidence="17">
    <location>
        <begin position="95"/>
        <end position="98"/>
    </location>
</feature>
<feature type="strand" evidence="17">
    <location>
        <begin position="105"/>
        <end position="108"/>
    </location>
</feature>
<feature type="helix" evidence="17">
    <location>
        <begin position="109"/>
        <end position="118"/>
    </location>
</feature>
<feature type="turn" evidence="17">
    <location>
        <begin position="119"/>
        <end position="121"/>
    </location>
</feature>
<feature type="strand" evidence="16">
    <location>
        <begin position="128"/>
        <end position="131"/>
    </location>
</feature>
<feature type="turn" evidence="17">
    <location>
        <begin position="142"/>
        <end position="144"/>
    </location>
</feature>
<feature type="strand" evidence="16">
    <location>
        <begin position="149"/>
        <end position="156"/>
    </location>
</feature>
<feature type="turn" evidence="17">
    <location>
        <begin position="162"/>
        <end position="172"/>
    </location>
</feature>
<comment type="function">
    <text evidence="9">Specific down-regulator of the NEDD8 conjugation system. Recruits NEDD8, UBD, and their conjugates to the proteasome for degradation. Isoform 1 promotes the degradation of NEDD8 more efficiently than isoform 2.</text>
</comment>
<comment type="subunit">
    <text evidence="4 5 6 8 9 10">Directly interacts with NEDD8 and PSMD4/S5a, a member of the regulatory subunit of the 26S proteasome. Isoform 1 binds to NEDD8 more efficiently than isoform 2. Interacts with AIPL1. The interaction with UBD via UBA domains facilitates the linking of UBD-conjugated target protein to the proteasome complex and accelerates UBD degradation and that of its conjugates.</text>
</comment>
<comment type="interaction">
    <interactant intactId="EBI-3936907">
        <id>Q9Y5A7</id>
    </interactant>
    <interactant intactId="EBI-6557414">
        <id>Q9NZN9</id>
        <label>AIPL1</label>
    </interactant>
    <organismsDiffer>false</organismsDiffer>
    <experiments>2</experiments>
</comment>
<comment type="interaction">
    <interactant intactId="EBI-3936907">
        <id>Q9Y5A7</id>
    </interactant>
    <interactant intactId="EBI-348469">
        <id>Q15427</id>
        <label>SF3B4</label>
    </interactant>
    <organismsDiffer>false</organismsDiffer>
    <experiments>3</experiments>
</comment>
<comment type="interaction">
    <interactant intactId="EBI-3936907">
        <id>Q9Y5A7</id>
    </interactant>
    <interactant intactId="EBI-710997">
        <id>P54274</id>
        <label>TERF1</label>
    </interactant>
    <organismsDiffer>false</organismsDiffer>
    <experiments>8</experiments>
</comment>
<comment type="interaction">
    <interactant intactId="EBI-3936907">
        <id>Q9Y5A7</id>
    </interactant>
    <interactant intactId="EBI-6657186">
        <id>O15205</id>
        <label>UBD</label>
    </interactant>
    <organismsDiffer>false</organismsDiffer>
    <experiments>2</experiments>
</comment>
<comment type="subcellular location">
    <subcellularLocation>
        <location evidence="4">Nucleus</location>
    </subcellularLocation>
    <text>Predominantly nuclear.</text>
</comment>
<comment type="alternative products">
    <event type="alternative splicing"/>
    <isoform>
        <id>Q9Y5A7-1</id>
        <name>1</name>
        <name>NUB1L</name>
        <sequence type="displayed"/>
    </isoform>
    <isoform>
        <id>Q9Y5A7-2</id>
        <name>2</name>
        <sequence type="described" ref="VSP_008335"/>
    </isoform>
</comment>
<comment type="tissue specificity">
    <text>Widely expressed with lowest expression in the pancreas for isoform 1 and in leukocytes, liver, prostate and skeletal muscle for isoform 2.</text>
</comment>
<comment type="induction">
    <text evidence="4 9">By TNF, IFNG/IFN-gamma and IFNB1/IFN-beta.</text>
</comment>
<comment type="sequence caution" evidence="15">
    <conflict type="frameshift">
        <sequence resource="EMBL-CDS" id="AAD42865"/>
    </conflict>
</comment>
<gene>
    <name type="primary">NUB1</name>
    <name type="synonym">NYREN18</name>
</gene>